<reference key="1">
    <citation type="journal article" date="2003" name="Endocrinology">
        <title>The mouse prolactin gene family locus.</title>
        <authorList>
            <person name="Wiemers D.O."/>
            <person name="Shao L.-J."/>
            <person name="Ain R."/>
            <person name="Dai G."/>
            <person name="Soares M.J."/>
        </authorList>
    </citation>
    <scope>NUCLEOTIDE SEQUENCE [MRNA]</scope>
    <scope>DEVELOPMENTAL STAGE</scope>
    <scope>TISSUE SPECIFICITY</scope>
    <source>
        <strain>CD-1</strain>
    </source>
</reference>
<reference key="2">
    <citation type="journal article" date="2005" name="Science">
        <title>The transcriptional landscape of the mammalian genome.</title>
        <authorList>
            <person name="Carninci P."/>
            <person name="Kasukawa T."/>
            <person name="Katayama S."/>
            <person name="Gough J."/>
            <person name="Frith M.C."/>
            <person name="Maeda N."/>
            <person name="Oyama R."/>
            <person name="Ravasi T."/>
            <person name="Lenhard B."/>
            <person name="Wells C."/>
            <person name="Kodzius R."/>
            <person name="Shimokawa K."/>
            <person name="Bajic V.B."/>
            <person name="Brenner S.E."/>
            <person name="Batalov S."/>
            <person name="Forrest A.R."/>
            <person name="Zavolan M."/>
            <person name="Davis M.J."/>
            <person name="Wilming L.G."/>
            <person name="Aidinis V."/>
            <person name="Allen J.E."/>
            <person name="Ambesi-Impiombato A."/>
            <person name="Apweiler R."/>
            <person name="Aturaliya R.N."/>
            <person name="Bailey T.L."/>
            <person name="Bansal M."/>
            <person name="Baxter L."/>
            <person name="Beisel K.W."/>
            <person name="Bersano T."/>
            <person name="Bono H."/>
            <person name="Chalk A.M."/>
            <person name="Chiu K.P."/>
            <person name="Choudhary V."/>
            <person name="Christoffels A."/>
            <person name="Clutterbuck D.R."/>
            <person name="Crowe M.L."/>
            <person name="Dalla E."/>
            <person name="Dalrymple B.P."/>
            <person name="de Bono B."/>
            <person name="Della Gatta G."/>
            <person name="di Bernardo D."/>
            <person name="Down T."/>
            <person name="Engstrom P."/>
            <person name="Fagiolini M."/>
            <person name="Faulkner G."/>
            <person name="Fletcher C.F."/>
            <person name="Fukushima T."/>
            <person name="Furuno M."/>
            <person name="Futaki S."/>
            <person name="Gariboldi M."/>
            <person name="Georgii-Hemming P."/>
            <person name="Gingeras T.R."/>
            <person name="Gojobori T."/>
            <person name="Green R.E."/>
            <person name="Gustincich S."/>
            <person name="Harbers M."/>
            <person name="Hayashi Y."/>
            <person name="Hensch T.K."/>
            <person name="Hirokawa N."/>
            <person name="Hill D."/>
            <person name="Huminiecki L."/>
            <person name="Iacono M."/>
            <person name="Ikeo K."/>
            <person name="Iwama A."/>
            <person name="Ishikawa T."/>
            <person name="Jakt M."/>
            <person name="Kanapin A."/>
            <person name="Katoh M."/>
            <person name="Kawasawa Y."/>
            <person name="Kelso J."/>
            <person name="Kitamura H."/>
            <person name="Kitano H."/>
            <person name="Kollias G."/>
            <person name="Krishnan S.P."/>
            <person name="Kruger A."/>
            <person name="Kummerfeld S.K."/>
            <person name="Kurochkin I.V."/>
            <person name="Lareau L.F."/>
            <person name="Lazarevic D."/>
            <person name="Lipovich L."/>
            <person name="Liu J."/>
            <person name="Liuni S."/>
            <person name="McWilliam S."/>
            <person name="Madan Babu M."/>
            <person name="Madera M."/>
            <person name="Marchionni L."/>
            <person name="Matsuda H."/>
            <person name="Matsuzawa S."/>
            <person name="Miki H."/>
            <person name="Mignone F."/>
            <person name="Miyake S."/>
            <person name="Morris K."/>
            <person name="Mottagui-Tabar S."/>
            <person name="Mulder N."/>
            <person name="Nakano N."/>
            <person name="Nakauchi H."/>
            <person name="Ng P."/>
            <person name="Nilsson R."/>
            <person name="Nishiguchi S."/>
            <person name="Nishikawa S."/>
            <person name="Nori F."/>
            <person name="Ohara O."/>
            <person name="Okazaki Y."/>
            <person name="Orlando V."/>
            <person name="Pang K.C."/>
            <person name="Pavan W.J."/>
            <person name="Pavesi G."/>
            <person name="Pesole G."/>
            <person name="Petrovsky N."/>
            <person name="Piazza S."/>
            <person name="Reed J."/>
            <person name="Reid J.F."/>
            <person name="Ring B.Z."/>
            <person name="Ringwald M."/>
            <person name="Rost B."/>
            <person name="Ruan Y."/>
            <person name="Salzberg S.L."/>
            <person name="Sandelin A."/>
            <person name="Schneider C."/>
            <person name="Schoenbach C."/>
            <person name="Sekiguchi K."/>
            <person name="Semple C.A."/>
            <person name="Seno S."/>
            <person name="Sessa L."/>
            <person name="Sheng Y."/>
            <person name="Shibata Y."/>
            <person name="Shimada H."/>
            <person name="Shimada K."/>
            <person name="Silva D."/>
            <person name="Sinclair B."/>
            <person name="Sperling S."/>
            <person name="Stupka E."/>
            <person name="Sugiura K."/>
            <person name="Sultana R."/>
            <person name="Takenaka Y."/>
            <person name="Taki K."/>
            <person name="Tammoja K."/>
            <person name="Tan S.L."/>
            <person name="Tang S."/>
            <person name="Taylor M.S."/>
            <person name="Tegner J."/>
            <person name="Teichmann S.A."/>
            <person name="Ueda H.R."/>
            <person name="van Nimwegen E."/>
            <person name="Verardo R."/>
            <person name="Wei C.L."/>
            <person name="Yagi K."/>
            <person name="Yamanishi H."/>
            <person name="Zabarovsky E."/>
            <person name="Zhu S."/>
            <person name="Zimmer A."/>
            <person name="Hide W."/>
            <person name="Bult C."/>
            <person name="Grimmond S.M."/>
            <person name="Teasdale R.D."/>
            <person name="Liu E.T."/>
            <person name="Brusic V."/>
            <person name="Quackenbush J."/>
            <person name="Wahlestedt C."/>
            <person name="Mattick J.S."/>
            <person name="Hume D.A."/>
            <person name="Kai C."/>
            <person name="Sasaki D."/>
            <person name="Tomaru Y."/>
            <person name="Fukuda S."/>
            <person name="Kanamori-Katayama M."/>
            <person name="Suzuki M."/>
            <person name="Aoki J."/>
            <person name="Arakawa T."/>
            <person name="Iida J."/>
            <person name="Imamura K."/>
            <person name="Itoh M."/>
            <person name="Kato T."/>
            <person name="Kawaji H."/>
            <person name="Kawagashira N."/>
            <person name="Kawashima T."/>
            <person name="Kojima M."/>
            <person name="Kondo S."/>
            <person name="Konno H."/>
            <person name="Nakano K."/>
            <person name="Ninomiya N."/>
            <person name="Nishio T."/>
            <person name="Okada M."/>
            <person name="Plessy C."/>
            <person name="Shibata K."/>
            <person name="Shiraki T."/>
            <person name="Suzuki S."/>
            <person name="Tagami M."/>
            <person name="Waki K."/>
            <person name="Watahiki A."/>
            <person name="Okamura-Oho Y."/>
            <person name="Suzuki H."/>
            <person name="Kawai J."/>
            <person name="Hayashizaki Y."/>
        </authorList>
    </citation>
    <scope>NUCLEOTIDE SEQUENCE [LARGE SCALE MRNA]</scope>
    <source>
        <strain>C57BL/6J</strain>
        <tissue>Extraembryonic tissue</tissue>
        <tissue>Placenta</tissue>
    </source>
</reference>
<reference key="3">
    <citation type="journal article" date="2009" name="PLoS Biol.">
        <title>Lineage-specific biology revealed by a finished genome assembly of the mouse.</title>
        <authorList>
            <person name="Church D.M."/>
            <person name="Goodstadt L."/>
            <person name="Hillier L.W."/>
            <person name="Zody M.C."/>
            <person name="Goldstein S."/>
            <person name="She X."/>
            <person name="Bult C.J."/>
            <person name="Agarwala R."/>
            <person name="Cherry J.L."/>
            <person name="DiCuccio M."/>
            <person name="Hlavina W."/>
            <person name="Kapustin Y."/>
            <person name="Meric P."/>
            <person name="Maglott D."/>
            <person name="Birtle Z."/>
            <person name="Marques A.C."/>
            <person name="Graves T."/>
            <person name="Zhou S."/>
            <person name="Teague B."/>
            <person name="Potamousis K."/>
            <person name="Churas C."/>
            <person name="Place M."/>
            <person name="Herschleb J."/>
            <person name="Runnheim R."/>
            <person name="Forrest D."/>
            <person name="Amos-Landgraf J."/>
            <person name="Schwartz D.C."/>
            <person name="Cheng Z."/>
            <person name="Lindblad-Toh K."/>
            <person name="Eichler E.E."/>
            <person name="Ponting C.P."/>
        </authorList>
    </citation>
    <scope>NUCLEOTIDE SEQUENCE [LARGE SCALE GENOMIC DNA]</scope>
    <source>
        <strain>C57BL/6J</strain>
    </source>
</reference>
<reference key="4">
    <citation type="journal article" date="2004" name="Genome Res.">
        <title>The status, quality, and expansion of the NIH full-length cDNA project: the Mammalian Gene Collection (MGC).</title>
        <authorList>
            <consortium name="The MGC Project Team"/>
        </authorList>
    </citation>
    <scope>NUCLEOTIDE SEQUENCE [LARGE SCALE MRNA]</scope>
    <source>
        <tissue>Placenta</tissue>
    </source>
</reference>
<sequence length="251" mass="29258">MLLSLTHPSFLAMLPMLLMSNLLQWEGVTSASIHHIEDDYGEAYLKDLFDQAIKLSNDTMALTIEMRMIFFSDGFSSNMFRKIVLDFLKDHKHMIETLNSCHTFSLSVPETLEEARKISLEDFLKIIVSILNSWNKPLYHLETELHCMKGAPDAILIRANAIRTLNRELLETILMILSRVHPGMEENTDYPLWTDLASLQATNKERQFFALYKLFYCLRVDTFTVDHYLKYLMCMLYSDDICTSVKFYEDP</sequence>
<dbReference type="EMBL" id="AF525157">
    <property type="protein sequence ID" value="AAN39705.1"/>
    <property type="molecule type" value="mRNA"/>
</dbReference>
<dbReference type="EMBL" id="AK005486">
    <property type="protein sequence ID" value="BAB24072.1"/>
    <property type="molecule type" value="mRNA"/>
</dbReference>
<dbReference type="EMBL" id="AK014436">
    <property type="protein sequence ID" value="BAB29348.1"/>
    <property type="molecule type" value="mRNA"/>
</dbReference>
<dbReference type="EMBL" id="AL627326">
    <property type="status" value="NOT_ANNOTATED_CDS"/>
    <property type="molecule type" value="Genomic_DNA"/>
</dbReference>
<dbReference type="EMBL" id="BC099442">
    <property type="protein sequence ID" value="AAH99442.1"/>
    <property type="molecule type" value="mRNA"/>
</dbReference>
<dbReference type="CCDS" id="CCDS26406.1"/>
<dbReference type="RefSeq" id="NP_080482.1">
    <property type="nucleotide sequence ID" value="NM_026206.3"/>
</dbReference>
<dbReference type="SMR" id="Q9CRB5"/>
<dbReference type="FunCoup" id="Q9CRB5">
    <property type="interactions" value="113"/>
</dbReference>
<dbReference type="STRING" id="10090.ENSMUSP00000072712"/>
<dbReference type="GlyCosmos" id="Q9CRB5">
    <property type="glycosylation" value="1 site, No reported glycans"/>
</dbReference>
<dbReference type="GlyGen" id="Q9CRB5">
    <property type="glycosylation" value="1 site"/>
</dbReference>
<dbReference type="iPTMnet" id="Q9CRB5"/>
<dbReference type="PhosphoSitePlus" id="Q9CRB5"/>
<dbReference type="SwissPalm" id="Q9CRB5"/>
<dbReference type="PaxDb" id="10090-ENSMUSP00000072712"/>
<dbReference type="DNASU" id="67505"/>
<dbReference type="Ensembl" id="ENSMUST00000072943.5">
    <property type="protein sequence ID" value="ENSMUSP00000072712.4"/>
    <property type="gene ID" value="ENSMUSG00000060738.5"/>
</dbReference>
<dbReference type="GeneID" id="67505"/>
<dbReference type="KEGG" id="mmu:67505"/>
<dbReference type="UCSC" id="uc007pyd.1">
    <property type="organism name" value="mouse"/>
</dbReference>
<dbReference type="AGR" id="MGI:1914755"/>
<dbReference type="CTD" id="67505"/>
<dbReference type="MGI" id="MGI:1914755">
    <property type="gene designation" value="Prl7c1"/>
</dbReference>
<dbReference type="VEuPathDB" id="HostDB:ENSMUSG00000060738"/>
<dbReference type="eggNOG" id="ENOG502QYU3">
    <property type="taxonomic scope" value="Eukaryota"/>
</dbReference>
<dbReference type="GeneTree" id="ENSGT00950000182818"/>
<dbReference type="HOGENOM" id="CLU_088274_0_1_1"/>
<dbReference type="InParanoid" id="Q9CRB5"/>
<dbReference type="OMA" id="VYWSELP"/>
<dbReference type="OrthoDB" id="9593771at2759"/>
<dbReference type="PhylomeDB" id="Q9CRB5"/>
<dbReference type="TreeFam" id="TF332592"/>
<dbReference type="BioGRID-ORCS" id="67505">
    <property type="hits" value="3 hits in 75 CRISPR screens"/>
</dbReference>
<dbReference type="PRO" id="PR:Q9CRB5"/>
<dbReference type="Proteomes" id="UP000000589">
    <property type="component" value="Chromosome 13"/>
</dbReference>
<dbReference type="RNAct" id="Q9CRB5">
    <property type="molecule type" value="protein"/>
</dbReference>
<dbReference type="Bgee" id="ENSMUSG00000060738">
    <property type="expression patterns" value="Expressed in ectoplacental cone and 1 other cell type or tissue"/>
</dbReference>
<dbReference type="ExpressionAtlas" id="Q9CRB5">
    <property type="expression patterns" value="baseline and differential"/>
</dbReference>
<dbReference type="GO" id="GO:0005576">
    <property type="term" value="C:extracellular region"/>
    <property type="evidence" value="ECO:0007669"/>
    <property type="project" value="UniProtKB-SubCell"/>
</dbReference>
<dbReference type="GO" id="GO:0005179">
    <property type="term" value="F:hormone activity"/>
    <property type="evidence" value="ECO:0007669"/>
    <property type="project" value="UniProtKB-KW"/>
</dbReference>
<dbReference type="CDD" id="cd10288">
    <property type="entry name" value="prolactin_like"/>
    <property type="match status" value="1"/>
</dbReference>
<dbReference type="FunFam" id="1.20.1250.10:FF:000041">
    <property type="entry name" value="Growth hormone d20"/>
    <property type="match status" value="1"/>
</dbReference>
<dbReference type="Gene3D" id="1.20.1250.10">
    <property type="match status" value="1"/>
</dbReference>
<dbReference type="InterPro" id="IPR009079">
    <property type="entry name" value="4_helix_cytokine-like_core"/>
</dbReference>
<dbReference type="InterPro" id="IPR001400">
    <property type="entry name" value="Somatotropin/Prolactin"/>
</dbReference>
<dbReference type="InterPro" id="IPR018116">
    <property type="entry name" value="Somatotropin_CS"/>
</dbReference>
<dbReference type="PANTHER" id="PTHR11417:SF29">
    <property type="entry name" value="PROLACTIN-7C1"/>
    <property type="match status" value="1"/>
</dbReference>
<dbReference type="PANTHER" id="PTHR11417">
    <property type="entry name" value="SOMATOTROPIN,PROLACTIN"/>
    <property type="match status" value="1"/>
</dbReference>
<dbReference type="Pfam" id="PF00103">
    <property type="entry name" value="Hormone_1"/>
    <property type="match status" value="1"/>
</dbReference>
<dbReference type="PRINTS" id="PR00836">
    <property type="entry name" value="SOMATOTROPIN"/>
</dbReference>
<dbReference type="SUPFAM" id="SSF47266">
    <property type="entry name" value="4-helical cytokines"/>
    <property type="match status" value="1"/>
</dbReference>
<dbReference type="PROSITE" id="PS00266">
    <property type="entry name" value="SOMATOTROPIN_1"/>
    <property type="match status" value="1"/>
</dbReference>
<dbReference type="PROSITE" id="PS00338">
    <property type="entry name" value="SOMATOTROPIN_2"/>
    <property type="match status" value="1"/>
</dbReference>
<comment type="subcellular location">
    <subcellularLocation>
        <location evidence="1">Secreted</location>
    </subcellularLocation>
</comment>
<comment type="tissue specificity">
    <text evidence="3">Expressed exclusively in the placenta. Expressed in spongiotrophoblast cells and trophoblast giant cells of the junctional zone and in labyrinthine trophoblast.</text>
</comment>
<comment type="developmental stage">
    <text evidence="3">Detectable throughout the second half of gestation.</text>
</comment>
<comment type="similarity">
    <text evidence="4">Belongs to the somatotropin/prolactin family.</text>
</comment>
<name>PR7C1_MOUSE</name>
<accession>Q9CRB5</accession>
<evidence type="ECO:0000250" key="1"/>
<evidence type="ECO:0000255" key="2"/>
<evidence type="ECO:0000269" key="3">
    <source>
    </source>
</evidence>
<evidence type="ECO:0000305" key="4"/>
<protein>
    <recommendedName>
        <fullName>Prolactin-7C1</fullName>
    </recommendedName>
    <alternativeName>
        <fullName>Placental prolactin-like protein O</fullName>
        <shortName>PLP-O</shortName>
        <shortName>PRL-like protein O</shortName>
    </alternativeName>
</protein>
<proteinExistence type="evidence at transcript level"/>
<keyword id="KW-1015">Disulfide bond</keyword>
<keyword id="KW-0325">Glycoprotein</keyword>
<keyword id="KW-0372">Hormone</keyword>
<keyword id="KW-1185">Reference proteome</keyword>
<keyword id="KW-0964">Secreted</keyword>
<keyword id="KW-0732">Signal</keyword>
<organism>
    <name type="scientific">Mus musculus</name>
    <name type="common">Mouse</name>
    <dbReference type="NCBI Taxonomy" id="10090"/>
    <lineage>
        <taxon>Eukaryota</taxon>
        <taxon>Metazoa</taxon>
        <taxon>Chordata</taxon>
        <taxon>Craniata</taxon>
        <taxon>Vertebrata</taxon>
        <taxon>Euteleostomi</taxon>
        <taxon>Mammalia</taxon>
        <taxon>Eutheria</taxon>
        <taxon>Euarchontoglires</taxon>
        <taxon>Glires</taxon>
        <taxon>Rodentia</taxon>
        <taxon>Myomorpha</taxon>
        <taxon>Muroidea</taxon>
        <taxon>Muridae</taxon>
        <taxon>Murinae</taxon>
        <taxon>Mus</taxon>
        <taxon>Mus</taxon>
    </lineage>
</organism>
<gene>
    <name type="primary">Prl7c1</name>
    <name type="synonym">Prlpo</name>
</gene>
<feature type="signal peptide" evidence="2">
    <location>
        <begin position="1"/>
        <end position="30"/>
    </location>
</feature>
<feature type="chain" id="PRO_0000045151" description="Prolactin-7C1">
    <location>
        <begin position="31"/>
        <end position="251"/>
    </location>
</feature>
<feature type="glycosylation site" description="N-linked (GlcNAc...) asparagine" evidence="2">
    <location>
        <position position="57"/>
    </location>
</feature>
<feature type="disulfide bond" evidence="1">
    <location>
        <begin position="101"/>
        <end position="217"/>
    </location>
</feature>
<feature type="disulfide bond" evidence="1">
    <location>
        <begin position="234"/>
        <end position="242"/>
    </location>
</feature>